<accession>P12007</accession>
<sequence>MATAVRLLGRRVSSWRLRPLPSPLAVPQRAHSMLPVDDDINGLNEEQKQLRHTISKFVQENLAPKAQEIDQSNDFKNLREFWKQLGSLGVLGITAPVQYGGSGLGYLEHVLVMEEISRASAAVGLSYGAHSNLCINQIVRNGNEAQKEKYLPKLISGEFIGALAMSEPNAGSDVVSMRLKAEKKGDHYVLNGNKFWITNGPDADVLVVYAKTDLTAVPASRGITAFIVEKDMPGFSTSKKLDKLGMRGSNTCELVFEDCKVPAANILSQESKGVYVLMSGLDLERLVLAGGPLGIMQAVLDHTIPYLHVREAFGQKIGQFQLMQGKMADMYTRLMACRQYVYNVARACDEGHITAKDCAGVILYTAECATQVALDGIQCLGGNGYINDFPMGRFLRDAKLYEIGGGTSEVRRLVIGRAFNADFR</sequence>
<reference key="1">
    <citation type="journal article" date="1989" name="J. Biol. Chem.">
        <title>Molecular cloning and nucleotide sequence of cDNAs encoding the precursors of rat long chain acyl-coenzyme A, short chain acyl-coenzyme A, and isovaleryl-coenzyme A dehydrogenases. Sequence homology of four enzymes of the acyl-CoA dehydrogenase family.</title>
        <authorList>
            <person name="Matsubara Y."/>
            <person name="Indo Y."/>
            <person name="Naito E."/>
            <person name="Ozasa H."/>
            <person name="Glassberg R."/>
            <person name="Vockley J."/>
            <person name="Ikeda Y."/>
            <person name="Kraus J."/>
            <person name="Tanaka K."/>
        </authorList>
    </citation>
    <scope>NUCLEOTIDE SEQUENCE [MRNA]</scope>
    <scope>PROTEIN SEQUENCE OF 31-61; 66-76; 77-83; 198-211; 212-230; 231-239 AND 261-272</scope>
</reference>
<reference key="2">
    <citation type="journal article" date="2004" name="Genome Res.">
        <title>The status, quality, and expansion of the NIH full-length cDNA project: the Mammalian Gene Collection (MGC).</title>
        <authorList>
            <consortium name="The MGC Project Team"/>
        </authorList>
    </citation>
    <scope>NUCLEOTIDE SEQUENCE [LARGE SCALE MRNA]</scope>
    <source>
        <tissue>Heart</tissue>
    </source>
</reference>
<reference key="3">
    <citation type="journal article" date="1987" name="Genomics">
        <title>Isolation of cDNA clones coding for rat isovaleryl-CoA dehydrogenase and assignment of the gene to human chromosome 15.</title>
        <authorList>
            <person name="Kraus J.P."/>
            <person name="Matsubara Y."/>
            <person name="Barton D."/>
            <person name="Yang-Feng T.L."/>
            <person name="Glassberg R."/>
            <person name="Ito M."/>
            <person name="Ikeda Y."/>
            <person name="Mole J."/>
            <person name="Francke U."/>
            <person name="Tanaka K."/>
        </authorList>
    </citation>
    <scope>NUCLEOTIDE SEQUENCE [MRNA] OF 1-48</scope>
</reference>
<reference key="4">
    <citation type="journal article" date="1983" name="J. Biol. Chem.">
        <title>Purification and characterization of isovaleryl coenzyme A dehydrogenase from rat liver mitochondria.</title>
        <authorList>
            <person name="Ikeda Y."/>
            <person name="Tanaka K."/>
        </authorList>
    </citation>
    <scope>SUBCELLULAR LOCATION</scope>
    <scope>COFACTOR</scope>
    <scope>CATALYTIC ACTIVITY</scope>
</reference>
<reference key="5">
    <citation type="submission" date="2007-04" db="UniProtKB">
        <authorList>
            <person name="Lubec G."/>
            <person name="Afjehi-Sadat L."/>
            <person name="Chen W.-Q."/>
        </authorList>
    </citation>
    <scope>PROTEIN SEQUENCE OF 119-140; 273-285 AND 400-411</scope>
    <scope>IDENTIFICATION BY MASS SPECTROMETRY</scope>
    <source>
        <strain>Sprague-Dawley</strain>
        <tissue>Hippocampus</tissue>
        <tissue>Spinal cord</tissue>
    </source>
</reference>
<feature type="transit peptide" description="Mitochondrion" evidence="3">
    <location>
        <begin position="1"/>
        <end position="30"/>
    </location>
</feature>
<feature type="chain" id="PRO_0000000534" description="Isovaleryl-CoA dehydrogenase, mitochondrial">
    <location>
        <begin position="31"/>
        <end position="424"/>
    </location>
</feature>
<feature type="active site" description="Proton acceptor" evidence="1">
    <location>
        <position position="284"/>
    </location>
</feature>
<feature type="binding site" evidence="1">
    <location>
        <begin position="163"/>
        <end position="172"/>
    </location>
    <ligand>
        <name>FAD</name>
        <dbReference type="ChEBI" id="CHEBI:57692"/>
    </ligand>
</feature>
<feature type="binding site" evidence="1">
    <location>
        <position position="172"/>
    </location>
    <ligand>
        <name>substrate</name>
    </ligand>
</feature>
<feature type="binding site" evidence="1">
    <location>
        <begin position="196"/>
        <end position="198"/>
    </location>
    <ligand>
        <name>FAD</name>
        <dbReference type="ChEBI" id="CHEBI:57692"/>
    </ligand>
</feature>
<feature type="binding site" evidence="1">
    <location>
        <begin position="220"/>
        <end position="221"/>
    </location>
    <ligand>
        <name>substrate</name>
    </ligand>
</feature>
<feature type="binding site" evidence="1">
    <location>
        <position position="275"/>
    </location>
    <ligand>
        <name>substrate</name>
    </ligand>
</feature>
<feature type="binding site" evidence="1">
    <location>
        <begin position="282"/>
        <end position="285"/>
    </location>
    <ligand>
        <name>substrate</name>
    </ligand>
</feature>
<feature type="binding site" evidence="1">
    <location>
        <position position="310"/>
    </location>
    <ligand>
        <name>FAD</name>
        <dbReference type="ChEBI" id="CHEBI:57692"/>
    </ligand>
</feature>
<feature type="binding site" evidence="1">
    <location>
        <position position="321"/>
    </location>
    <ligand>
        <name>FAD</name>
        <dbReference type="ChEBI" id="CHEBI:57692"/>
    </ligand>
</feature>
<feature type="binding site" evidence="1">
    <location>
        <begin position="378"/>
        <end position="382"/>
    </location>
    <ligand>
        <name>FAD</name>
        <dbReference type="ChEBI" id="CHEBI:57692"/>
    </ligand>
</feature>
<feature type="binding site" evidence="1">
    <location>
        <begin position="405"/>
        <end position="406"/>
    </location>
    <ligand>
        <name>substrate</name>
    </ligand>
</feature>
<feature type="binding site" evidence="1">
    <location>
        <begin position="407"/>
        <end position="409"/>
    </location>
    <ligand>
        <name>FAD</name>
        <dbReference type="ChEBI" id="CHEBI:57692"/>
    </ligand>
</feature>
<feature type="modified residue" description="N6-acetyllysine; alternate" evidence="2">
    <location>
        <position position="56"/>
    </location>
</feature>
<feature type="modified residue" description="N6-succinyllysine; alternate" evidence="2">
    <location>
        <position position="56"/>
    </location>
</feature>
<feature type="modified residue" description="N6-acetyllysine; alternate" evidence="2">
    <location>
        <position position="65"/>
    </location>
</feature>
<feature type="modified residue" description="N6-succinyllysine; alternate" evidence="2">
    <location>
        <position position="65"/>
    </location>
</feature>
<feature type="modified residue" description="N6-acetyllysine; alternate" evidence="1">
    <location>
        <position position="76"/>
    </location>
</feature>
<feature type="modified residue" description="N6-succinyllysine; alternate" evidence="2">
    <location>
        <position position="76"/>
    </location>
</feature>
<feature type="modified residue" description="N6-acetyllysine" evidence="2">
    <location>
        <position position="239"/>
    </location>
</feature>
<feature type="modified residue" description="N6-acetyllysine; alternate" evidence="2">
    <location>
        <position position="260"/>
    </location>
</feature>
<feature type="modified residue" description="N6-succinyllysine; alternate" evidence="2">
    <location>
        <position position="260"/>
    </location>
</feature>
<feature type="modified residue" description="N6-succinyllysine" evidence="2">
    <location>
        <position position="316"/>
    </location>
</feature>
<dbReference type="EC" id="1.3.8.4" evidence="4"/>
<dbReference type="EC" id="1.3.8.1" evidence="1"/>
<dbReference type="EMBL" id="J05031">
    <property type="protein sequence ID" value="AAA41454.1"/>
    <property type="molecule type" value="mRNA"/>
</dbReference>
<dbReference type="EMBL" id="BC088401">
    <property type="protein sequence ID" value="AAH88401.1"/>
    <property type="molecule type" value="mRNA"/>
</dbReference>
<dbReference type="EMBL" id="M19867">
    <property type="protein sequence ID" value="AAA41459.1"/>
    <property type="molecule type" value="mRNA"/>
</dbReference>
<dbReference type="PIR" id="C34252">
    <property type="entry name" value="C34252"/>
</dbReference>
<dbReference type="RefSeq" id="NP_036724.1">
    <property type="nucleotide sequence ID" value="NM_012592.2"/>
</dbReference>
<dbReference type="SMR" id="P12007"/>
<dbReference type="BioGRID" id="246669">
    <property type="interactions" value="2"/>
</dbReference>
<dbReference type="FunCoup" id="P12007">
    <property type="interactions" value="2504"/>
</dbReference>
<dbReference type="IntAct" id="P12007">
    <property type="interactions" value="2"/>
</dbReference>
<dbReference type="STRING" id="10116.ENSRNOP00000013829"/>
<dbReference type="GlyGen" id="P12007">
    <property type="glycosylation" value="1 site, 1 O-linked glycan (1 site)"/>
</dbReference>
<dbReference type="iPTMnet" id="P12007"/>
<dbReference type="PhosphoSitePlus" id="P12007"/>
<dbReference type="SwissPalm" id="P12007"/>
<dbReference type="jPOST" id="P12007"/>
<dbReference type="PaxDb" id="10116-ENSRNOP00000013829"/>
<dbReference type="Ensembl" id="ENSRNOT00000013829.6">
    <property type="protein sequence ID" value="ENSRNOP00000013829.3"/>
    <property type="gene ID" value="ENSRNOG00000009421.6"/>
</dbReference>
<dbReference type="GeneID" id="24513"/>
<dbReference type="KEGG" id="rno:24513"/>
<dbReference type="UCSC" id="RGD:2936">
    <property type="organism name" value="rat"/>
</dbReference>
<dbReference type="AGR" id="RGD:2936"/>
<dbReference type="CTD" id="3712"/>
<dbReference type="RGD" id="2936">
    <property type="gene designation" value="Ivd"/>
</dbReference>
<dbReference type="eggNOG" id="KOG0141">
    <property type="taxonomic scope" value="Eukaryota"/>
</dbReference>
<dbReference type="GeneTree" id="ENSGT00940000158100"/>
<dbReference type="HOGENOM" id="CLU_018204_0_1_1"/>
<dbReference type="InParanoid" id="P12007"/>
<dbReference type="OMA" id="CFITNSG"/>
<dbReference type="OrthoDB" id="9988775at2759"/>
<dbReference type="PhylomeDB" id="P12007"/>
<dbReference type="TreeFam" id="TF105050"/>
<dbReference type="BRENDA" id="1.3.8.4">
    <property type="organism ID" value="5301"/>
</dbReference>
<dbReference type="Reactome" id="R-RNO-70895">
    <property type="pathway name" value="Branched-chain amino acid catabolism"/>
</dbReference>
<dbReference type="SABIO-RK" id="P12007"/>
<dbReference type="UniPathway" id="UPA00363">
    <property type="reaction ID" value="UER00860"/>
</dbReference>
<dbReference type="PRO" id="PR:P12007"/>
<dbReference type="Proteomes" id="UP000002494">
    <property type="component" value="Chromosome 3"/>
</dbReference>
<dbReference type="Bgee" id="ENSRNOG00000009421">
    <property type="expression patterns" value="Expressed in heart and 20 other cell types or tissues"/>
</dbReference>
<dbReference type="GO" id="GO:0005759">
    <property type="term" value="C:mitochondrial matrix"/>
    <property type="evidence" value="ECO:0000314"/>
    <property type="project" value="BHF-UCL"/>
</dbReference>
<dbReference type="GO" id="GO:0031966">
    <property type="term" value="C:mitochondrial membrane"/>
    <property type="evidence" value="ECO:0000314"/>
    <property type="project" value="BHF-UCL"/>
</dbReference>
<dbReference type="GO" id="GO:0005739">
    <property type="term" value="C:mitochondrion"/>
    <property type="evidence" value="ECO:0000318"/>
    <property type="project" value="GO_Central"/>
</dbReference>
<dbReference type="GO" id="GO:0005654">
    <property type="term" value="C:nucleoplasm"/>
    <property type="evidence" value="ECO:0007669"/>
    <property type="project" value="Ensembl"/>
</dbReference>
<dbReference type="GO" id="GO:0008470">
    <property type="term" value="F:3-methylbutanoyl-CoA dehydrogenase activity"/>
    <property type="evidence" value="ECO:0000314"/>
    <property type="project" value="BHF-UCL"/>
</dbReference>
<dbReference type="GO" id="GO:0050660">
    <property type="term" value="F:flavin adenine dinucleotide binding"/>
    <property type="evidence" value="ECO:0007669"/>
    <property type="project" value="InterPro"/>
</dbReference>
<dbReference type="GO" id="GO:0042802">
    <property type="term" value="F:identical protein binding"/>
    <property type="evidence" value="ECO:0000353"/>
    <property type="project" value="RGD"/>
</dbReference>
<dbReference type="GO" id="GO:0009083">
    <property type="term" value="P:branched-chain amino acid catabolic process"/>
    <property type="evidence" value="ECO:0000266"/>
    <property type="project" value="RGD"/>
</dbReference>
<dbReference type="GO" id="GO:0033539">
    <property type="term" value="P:fatty acid beta-oxidation using acyl-CoA dehydrogenase"/>
    <property type="evidence" value="ECO:0000266"/>
    <property type="project" value="RGD"/>
</dbReference>
<dbReference type="GO" id="GO:0006552">
    <property type="term" value="P:L-leucine catabolic process"/>
    <property type="evidence" value="ECO:0000314"/>
    <property type="project" value="BHF-UCL"/>
</dbReference>
<dbReference type="GO" id="GO:0006551">
    <property type="term" value="P:L-leucine metabolic process"/>
    <property type="evidence" value="ECO:0000304"/>
    <property type="project" value="RGD"/>
</dbReference>
<dbReference type="CDD" id="cd01156">
    <property type="entry name" value="IVD"/>
    <property type="match status" value="1"/>
</dbReference>
<dbReference type="FunFam" id="1.10.540.10:FF:000007">
    <property type="entry name" value="Isovaleryl-CoA dehydrogenase, mitochondrial"/>
    <property type="match status" value="1"/>
</dbReference>
<dbReference type="FunFam" id="2.40.110.10:FF:000004">
    <property type="entry name" value="Isovaleryl-CoA dehydrogenase, mitochondrial"/>
    <property type="match status" value="1"/>
</dbReference>
<dbReference type="FunFam" id="1.20.140.10:FF:000003">
    <property type="entry name" value="isovaleryl-CoA dehydrogenase, mitochondrial"/>
    <property type="match status" value="1"/>
</dbReference>
<dbReference type="Gene3D" id="1.10.540.10">
    <property type="entry name" value="Acyl-CoA dehydrogenase/oxidase, N-terminal domain"/>
    <property type="match status" value="1"/>
</dbReference>
<dbReference type="Gene3D" id="2.40.110.10">
    <property type="entry name" value="Butyryl-CoA Dehydrogenase, subunit A, domain 2"/>
    <property type="match status" value="1"/>
</dbReference>
<dbReference type="Gene3D" id="1.20.140.10">
    <property type="entry name" value="Butyryl-CoA Dehydrogenase, subunit A, domain 3"/>
    <property type="match status" value="1"/>
</dbReference>
<dbReference type="InterPro" id="IPR006089">
    <property type="entry name" value="Acyl-CoA_DH_CS"/>
</dbReference>
<dbReference type="InterPro" id="IPR006091">
    <property type="entry name" value="Acyl-CoA_Oxase/DH_mid-dom"/>
</dbReference>
<dbReference type="InterPro" id="IPR046373">
    <property type="entry name" value="Acyl-CoA_Oxase/DH_mid-dom_sf"/>
</dbReference>
<dbReference type="InterPro" id="IPR036250">
    <property type="entry name" value="AcylCo_DH-like_C"/>
</dbReference>
<dbReference type="InterPro" id="IPR009075">
    <property type="entry name" value="AcylCo_DH/oxidase_C"/>
</dbReference>
<dbReference type="InterPro" id="IPR013786">
    <property type="entry name" value="AcylCoA_DH/ox_N"/>
</dbReference>
<dbReference type="InterPro" id="IPR037069">
    <property type="entry name" value="AcylCoA_DH/ox_N_sf"/>
</dbReference>
<dbReference type="InterPro" id="IPR009100">
    <property type="entry name" value="AcylCoA_DH/oxidase_NM_dom_sf"/>
</dbReference>
<dbReference type="InterPro" id="IPR034183">
    <property type="entry name" value="IVD"/>
</dbReference>
<dbReference type="PANTHER" id="PTHR43884">
    <property type="entry name" value="ACYL-COA DEHYDROGENASE"/>
    <property type="match status" value="1"/>
</dbReference>
<dbReference type="PANTHER" id="PTHR43884:SF12">
    <property type="entry name" value="ISOVALERYL-COA DEHYDROGENASE, MITOCHONDRIAL-RELATED"/>
    <property type="match status" value="1"/>
</dbReference>
<dbReference type="Pfam" id="PF00441">
    <property type="entry name" value="Acyl-CoA_dh_1"/>
    <property type="match status" value="1"/>
</dbReference>
<dbReference type="Pfam" id="PF02770">
    <property type="entry name" value="Acyl-CoA_dh_M"/>
    <property type="match status" value="1"/>
</dbReference>
<dbReference type="Pfam" id="PF02771">
    <property type="entry name" value="Acyl-CoA_dh_N"/>
    <property type="match status" value="1"/>
</dbReference>
<dbReference type="SUPFAM" id="SSF47203">
    <property type="entry name" value="Acyl-CoA dehydrogenase C-terminal domain-like"/>
    <property type="match status" value="1"/>
</dbReference>
<dbReference type="SUPFAM" id="SSF56645">
    <property type="entry name" value="Acyl-CoA dehydrogenase NM domain-like"/>
    <property type="match status" value="1"/>
</dbReference>
<dbReference type="PROSITE" id="PS00072">
    <property type="entry name" value="ACYL_COA_DH_1"/>
    <property type="match status" value="1"/>
</dbReference>
<dbReference type="PROSITE" id="PS00073">
    <property type="entry name" value="ACYL_COA_DH_2"/>
    <property type="match status" value="1"/>
</dbReference>
<evidence type="ECO:0000250" key="1">
    <source>
        <dbReference type="UniProtKB" id="P26440"/>
    </source>
</evidence>
<evidence type="ECO:0000250" key="2">
    <source>
        <dbReference type="UniProtKB" id="Q9JHI5"/>
    </source>
</evidence>
<evidence type="ECO:0000269" key="3">
    <source>
    </source>
</evidence>
<evidence type="ECO:0000269" key="4">
    <source>
    </source>
</evidence>
<evidence type="ECO:0000305" key="5"/>
<keyword id="KW-0007">Acetylation</keyword>
<keyword id="KW-0903">Direct protein sequencing</keyword>
<keyword id="KW-0274">FAD</keyword>
<keyword id="KW-0285">Flavoprotein</keyword>
<keyword id="KW-0496">Mitochondrion</keyword>
<keyword id="KW-0560">Oxidoreductase</keyword>
<keyword id="KW-1185">Reference proteome</keyword>
<keyword id="KW-0809">Transit peptide</keyword>
<name>IVD_RAT</name>
<protein>
    <recommendedName>
        <fullName>Isovaleryl-CoA dehydrogenase, mitochondrial</fullName>
        <shortName>IVD</shortName>
        <ecNumber evidence="4">1.3.8.4</ecNumber>
    </recommendedName>
    <alternativeName>
        <fullName>Butyryl-CoA dehydrogenase</fullName>
        <ecNumber evidence="1">1.3.8.1</ecNumber>
    </alternativeName>
</protein>
<gene>
    <name type="primary">Ivd</name>
</gene>
<proteinExistence type="evidence at protein level"/>
<comment type="function">
    <text evidence="1">Catalyzes the conversion of isovaleryl-CoA/3-methylbutanoyl-CoA to 3-methylbut-2-enoyl-CoA as an intermediate step in the leucine (Leu) catabolic pathway. To a lesser extent, is also able to catalyze the oxidation of other saturated short-chain acyl-CoA thioesters as pentanoyl-CoA, hexenoyl-CoA and butenoyl-CoA.</text>
</comment>
<comment type="catalytic activity">
    <reaction evidence="4">
        <text>3-methylbutanoyl-CoA + oxidized [electron-transfer flavoprotein] + H(+) = 3-methylbut-2-enoyl-CoA + reduced [electron-transfer flavoprotein]</text>
        <dbReference type="Rhea" id="RHEA:12276"/>
        <dbReference type="Rhea" id="RHEA-COMP:10685"/>
        <dbReference type="Rhea" id="RHEA-COMP:10686"/>
        <dbReference type="ChEBI" id="CHEBI:15378"/>
        <dbReference type="ChEBI" id="CHEBI:57344"/>
        <dbReference type="ChEBI" id="CHEBI:57345"/>
        <dbReference type="ChEBI" id="CHEBI:57692"/>
        <dbReference type="ChEBI" id="CHEBI:58307"/>
        <dbReference type="EC" id="1.3.8.4"/>
    </reaction>
</comment>
<comment type="catalytic activity">
    <reaction evidence="1">
        <text>pentanoyl-CoA + oxidized [electron-transfer flavoprotein] + H(+) = (2E)-pentenoyl-CoA + reduced [electron-transfer flavoprotein]</text>
        <dbReference type="Rhea" id="RHEA:43456"/>
        <dbReference type="Rhea" id="RHEA-COMP:10685"/>
        <dbReference type="Rhea" id="RHEA-COMP:10686"/>
        <dbReference type="ChEBI" id="CHEBI:15378"/>
        <dbReference type="ChEBI" id="CHEBI:57389"/>
        <dbReference type="ChEBI" id="CHEBI:57692"/>
        <dbReference type="ChEBI" id="CHEBI:58307"/>
        <dbReference type="ChEBI" id="CHEBI:86160"/>
    </reaction>
</comment>
<comment type="catalytic activity">
    <reaction evidence="1">
        <text>hexanoyl-CoA + oxidized [electron-transfer flavoprotein] + H(+) = (2E)-hexenoyl-CoA + reduced [electron-transfer flavoprotein]</text>
        <dbReference type="Rhea" id="RHEA:43464"/>
        <dbReference type="Rhea" id="RHEA-COMP:10685"/>
        <dbReference type="Rhea" id="RHEA-COMP:10686"/>
        <dbReference type="ChEBI" id="CHEBI:15378"/>
        <dbReference type="ChEBI" id="CHEBI:57692"/>
        <dbReference type="ChEBI" id="CHEBI:58307"/>
        <dbReference type="ChEBI" id="CHEBI:62077"/>
        <dbReference type="ChEBI" id="CHEBI:62620"/>
    </reaction>
</comment>
<comment type="catalytic activity">
    <reaction evidence="1">
        <text>butanoyl-CoA + oxidized [electron-transfer flavoprotein] + H(+) = (2E)-butenoyl-CoA + reduced [electron-transfer flavoprotein]</text>
        <dbReference type="Rhea" id="RHEA:24004"/>
        <dbReference type="Rhea" id="RHEA-COMP:10685"/>
        <dbReference type="Rhea" id="RHEA-COMP:10686"/>
        <dbReference type="ChEBI" id="CHEBI:15378"/>
        <dbReference type="ChEBI" id="CHEBI:57332"/>
        <dbReference type="ChEBI" id="CHEBI:57371"/>
        <dbReference type="ChEBI" id="CHEBI:57692"/>
        <dbReference type="ChEBI" id="CHEBI:58307"/>
        <dbReference type="EC" id="1.3.8.1"/>
    </reaction>
</comment>
<comment type="cofactor">
    <cofactor evidence="4">
        <name>FAD</name>
        <dbReference type="ChEBI" id="CHEBI:57692"/>
    </cofactor>
</comment>
<comment type="pathway">
    <text>Amino-acid degradation; L-leucine degradation; (S)-3-hydroxy-3-methylglutaryl-CoA from 3-isovaleryl-CoA: step 1/3.</text>
</comment>
<comment type="subunit">
    <text evidence="1">Homotetramer.</text>
</comment>
<comment type="subcellular location">
    <subcellularLocation>
        <location evidence="4">Mitochondrion matrix</location>
    </subcellularLocation>
</comment>
<comment type="similarity">
    <text evidence="5">Belongs to the acyl-CoA dehydrogenase family.</text>
</comment>
<organism>
    <name type="scientific">Rattus norvegicus</name>
    <name type="common">Rat</name>
    <dbReference type="NCBI Taxonomy" id="10116"/>
    <lineage>
        <taxon>Eukaryota</taxon>
        <taxon>Metazoa</taxon>
        <taxon>Chordata</taxon>
        <taxon>Craniata</taxon>
        <taxon>Vertebrata</taxon>
        <taxon>Euteleostomi</taxon>
        <taxon>Mammalia</taxon>
        <taxon>Eutheria</taxon>
        <taxon>Euarchontoglires</taxon>
        <taxon>Glires</taxon>
        <taxon>Rodentia</taxon>
        <taxon>Myomorpha</taxon>
        <taxon>Muroidea</taxon>
        <taxon>Muridae</taxon>
        <taxon>Murinae</taxon>
        <taxon>Rattus</taxon>
    </lineage>
</organism>